<gene>
    <name evidence="1" type="primary">pyrB</name>
    <name type="ordered locus">UNCMA_18370</name>
    <name type="ORF">RCIX1029</name>
</gene>
<sequence length="308" mass="33975">MNFERKHIISTKDFSRDEIDFILDRAARLEPFARKGSTVLNGSIVATLFYEPSTRTRLSFDTAVKRLGGTTIGFDSAASSSTVKGETLADTIRIIDSYADAIVLRHPKEGAARMASEISRVPVINAGDGAGHHPTQTLLDLYTMRKECKKAICDLNVAIVGDLKYGRTVHSLAYALSLYGANLSFVSPEQLKMPGSIINYLKRKGLSITETSSLQDVLGRADVIYMTRIQKERFPDPAEYQKVAGTYRITPETLAGVGRDTIVMHPLPRVDEIAPEVDATKHARYFQQSFYGVPVRMAVLSLVMGVDI</sequence>
<proteinExistence type="inferred from homology"/>
<comment type="function">
    <text evidence="1">Catalyzes the condensation of carbamoyl phosphate and aspartate to form carbamoyl aspartate and inorganic phosphate, the committed step in the de novo pyrimidine nucleotide biosynthesis pathway.</text>
</comment>
<comment type="catalytic activity">
    <reaction evidence="1">
        <text>carbamoyl phosphate + L-aspartate = N-carbamoyl-L-aspartate + phosphate + H(+)</text>
        <dbReference type="Rhea" id="RHEA:20013"/>
        <dbReference type="ChEBI" id="CHEBI:15378"/>
        <dbReference type="ChEBI" id="CHEBI:29991"/>
        <dbReference type="ChEBI" id="CHEBI:32814"/>
        <dbReference type="ChEBI" id="CHEBI:43474"/>
        <dbReference type="ChEBI" id="CHEBI:58228"/>
        <dbReference type="EC" id="2.1.3.2"/>
    </reaction>
</comment>
<comment type="pathway">
    <text evidence="1">Pyrimidine metabolism; UMP biosynthesis via de novo pathway; (S)-dihydroorotate from bicarbonate: step 2/3.</text>
</comment>
<comment type="subunit">
    <text evidence="1">Heterooligomer of catalytic and regulatory chains.</text>
</comment>
<comment type="similarity">
    <text evidence="1">Belongs to the aspartate/ornithine carbamoyltransferase superfamily. ATCase family.</text>
</comment>
<organism>
    <name type="scientific">Methanocella arvoryzae (strain DSM 22066 / NBRC 105507 / MRE50)</name>
    <dbReference type="NCBI Taxonomy" id="351160"/>
    <lineage>
        <taxon>Archaea</taxon>
        <taxon>Methanobacteriati</taxon>
        <taxon>Methanobacteriota</taxon>
        <taxon>Stenosarchaea group</taxon>
        <taxon>Methanomicrobia</taxon>
        <taxon>Methanocellales</taxon>
        <taxon>Methanocellaceae</taxon>
        <taxon>Methanocella</taxon>
    </lineage>
</organism>
<reference key="1">
    <citation type="journal article" date="2006" name="Science">
        <title>Genome of rice cluster I archaea -- the key methane producers in the rice rhizosphere.</title>
        <authorList>
            <person name="Erkel C."/>
            <person name="Kube M."/>
            <person name="Reinhardt R."/>
            <person name="Liesack W."/>
        </authorList>
    </citation>
    <scope>NUCLEOTIDE SEQUENCE [LARGE SCALE GENOMIC DNA]</scope>
    <source>
        <strain>DSM 22066 / NBRC 105507 / MRE50</strain>
    </source>
</reference>
<dbReference type="EC" id="2.1.3.2" evidence="1"/>
<dbReference type="EMBL" id="AM114193">
    <property type="protein sequence ID" value="CAJ36361.1"/>
    <property type="molecule type" value="Genomic_DNA"/>
</dbReference>
<dbReference type="RefSeq" id="WP_012036162.1">
    <property type="nucleotide sequence ID" value="NC_009464.1"/>
</dbReference>
<dbReference type="SMR" id="Q0W5I2"/>
<dbReference type="STRING" id="351160.RCIX1029"/>
<dbReference type="GeneID" id="5142692"/>
<dbReference type="KEGG" id="rci:RCIX1029"/>
<dbReference type="PATRIC" id="fig|351160.9.peg.1880"/>
<dbReference type="eggNOG" id="arCOG00911">
    <property type="taxonomic scope" value="Archaea"/>
</dbReference>
<dbReference type="OrthoDB" id="7792at2157"/>
<dbReference type="UniPathway" id="UPA00070">
    <property type="reaction ID" value="UER00116"/>
</dbReference>
<dbReference type="Proteomes" id="UP000000663">
    <property type="component" value="Chromosome"/>
</dbReference>
<dbReference type="GO" id="GO:0005829">
    <property type="term" value="C:cytosol"/>
    <property type="evidence" value="ECO:0007669"/>
    <property type="project" value="TreeGrafter"/>
</dbReference>
<dbReference type="GO" id="GO:0016597">
    <property type="term" value="F:amino acid binding"/>
    <property type="evidence" value="ECO:0007669"/>
    <property type="project" value="InterPro"/>
</dbReference>
<dbReference type="GO" id="GO:0004070">
    <property type="term" value="F:aspartate carbamoyltransferase activity"/>
    <property type="evidence" value="ECO:0007669"/>
    <property type="project" value="UniProtKB-UniRule"/>
</dbReference>
<dbReference type="GO" id="GO:0006207">
    <property type="term" value="P:'de novo' pyrimidine nucleobase biosynthetic process"/>
    <property type="evidence" value="ECO:0007669"/>
    <property type="project" value="InterPro"/>
</dbReference>
<dbReference type="GO" id="GO:0044205">
    <property type="term" value="P:'de novo' UMP biosynthetic process"/>
    <property type="evidence" value="ECO:0007669"/>
    <property type="project" value="UniProtKB-UniRule"/>
</dbReference>
<dbReference type="GO" id="GO:0006520">
    <property type="term" value="P:amino acid metabolic process"/>
    <property type="evidence" value="ECO:0007669"/>
    <property type="project" value="InterPro"/>
</dbReference>
<dbReference type="FunFam" id="3.40.50.1370:FF:000001">
    <property type="entry name" value="Aspartate carbamoyltransferase"/>
    <property type="match status" value="1"/>
</dbReference>
<dbReference type="FunFam" id="3.40.50.1370:FF:000002">
    <property type="entry name" value="Aspartate carbamoyltransferase 2"/>
    <property type="match status" value="1"/>
</dbReference>
<dbReference type="Gene3D" id="3.40.50.1370">
    <property type="entry name" value="Aspartate/ornithine carbamoyltransferase"/>
    <property type="match status" value="2"/>
</dbReference>
<dbReference type="HAMAP" id="MF_00001">
    <property type="entry name" value="Asp_carb_tr"/>
    <property type="match status" value="1"/>
</dbReference>
<dbReference type="InterPro" id="IPR006132">
    <property type="entry name" value="Asp/Orn_carbamoyltranf_P-bd"/>
</dbReference>
<dbReference type="InterPro" id="IPR006130">
    <property type="entry name" value="Asp/Orn_carbamoylTrfase"/>
</dbReference>
<dbReference type="InterPro" id="IPR036901">
    <property type="entry name" value="Asp/Orn_carbamoylTrfase_sf"/>
</dbReference>
<dbReference type="InterPro" id="IPR002082">
    <property type="entry name" value="Asp_carbamoyltransf"/>
</dbReference>
<dbReference type="InterPro" id="IPR006131">
    <property type="entry name" value="Asp_carbamoyltransf_Asp/Orn-bd"/>
</dbReference>
<dbReference type="NCBIfam" id="TIGR00670">
    <property type="entry name" value="asp_carb_tr"/>
    <property type="match status" value="1"/>
</dbReference>
<dbReference type="NCBIfam" id="NF002032">
    <property type="entry name" value="PRK00856.1"/>
    <property type="match status" value="1"/>
</dbReference>
<dbReference type="PANTHER" id="PTHR45753:SF6">
    <property type="entry name" value="ASPARTATE CARBAMOYLTRANSFERASE"/>
    <property type="match status" value="1"/>
</dbReference>
<dbReference type="PANTHER" id="PTHR45753">
    <property type="entry name" value="ORNITHINE CARBAMOYLTRANSFERASE, MITOCHONDRIAL"/>
    <property type="match status" value="1"/>
</dbReference>
<dbReference type="Pfam" id="PF00185">
    <property type="entry name" value="OTCace"/>
    <property type="match status" value="1"/>
</dbReference>
<dbReference type="Pfam" id="PF02729">
    <property type="entry name" value="OTCace_N"/>
    <property type="match status" value="1"/>
</dbReference>
<dbReference type="PRINTS" id="PR00100">
    <property type="entry name" value="AOTCASE"/>
</dbReference>
<dbReference type="PRINTS" id="PR00101">
    <property type="entry name" value="ATCASE"/>
</dbReference>
<dbReference type="SUPFAM" id="SSF53671">
    <property type="entry name" value="Aspartate/ornithine carbamoyltransferase"/>
    <property type="match status" value="1"/>
</dbReference>
<dbReference type="PROSITE" id="PS00097">
    <property type="entry name" value="CARBAMOYLTRANSFERASE"/>
    <property type="match status" value="1"/>
</dbReference>
<keyword id="KW-0665">Pyrimidine biosynthesis</keyword>
<keyword id="KW-1185">Reference proteome</keyword>
<keyword id="KW-0808">Transferase</keyword>
<protein>
    <recommendedName>
        <fullName evidence="1">Aspartate carbamoyltransferase catalytic subunit</fullName>
        <ecNumber evidence="1">2.1.3.2</ecNumber>
    </recommendedName>
    <alternativeName>
        <fullName evidence="1">Aspartate transcarbamylase</fullName>
        <shortName evidence="1">ATCase</shortName>
    </alternativeName>
</protein>
<name>PYRB_METAR</name>
<evidence type="ECO:0000255" key="1">
    <source>
        <dbReference type="HAMAP-Rule" id="MF_00001"/>
    </source>
</evidence>
<accession>Q0W5I2</accession>
<feature type="chain" id="PRO_0000301651" description="Aspartate carbamoyltransferase catalytic subunit">
    <location>
        <begin position="1"/>
        <end position="308"/>
    </location>
</feature>
<feature type="binding site" evidence="1">
    <location>
        <position position="55"/>
    </location>
    <ligand>
        <name>carbamoyl phosphate</name>
        <dbReference type="ChEBI" id="CHEBI:58228"/>
    </ligand>
</feature>
<feature type="binding site" evidence="1">
    <location>
        <position position="56"/>
    </location>
    <ligand>
        <name>carbamoyl phosphate</name>
        <dbReference type="ChEBI" id="CHEBI:58228"/>
    </ligand>
</feature>
<feature type="binding site" evidence="1">
    <location>
        <position position="84"/>
    </location>
    <ligand>
        <name>L-aspartate</name>
        <dbReference type="ChEBI" id="CHEBI:29991"/>
    </ligand>
</feature>
<feature type="binding site" evidence="1">
    <location>
        <position position="105"/>
    </location>
    <ligand>
        <name>carbamoyl phosphate</name>
        <dbReference type="ChEBI" id="CHEBI:58228"/>
    </ligand>
</feature>
<feature type="binding site" evidence="1">
    <location>
        <position position="133"/>
    </location>
    <ligand>
        <name>carbamoyl phosphate</name>
        <dbReference type="ChEBI" id="CHEBI:58228"/>
    </ligand>
</feature>
<feature type="binding site" evidence="1">
    <location>
        <position position="136"/>
    </location>
    <ligand>
        <name>carbamoyl phosphate</name>
        <dbReference type="ChEBI" id="CHEBI:58228"/>
    </ligand>
</feature>
<feature type="binding site" evidence="1">
    <location>
        <position position="167"/>
    </location>
    <ligand>
        <name>L-aspartate</name>
        <dbReference type="ChEBI" id="CHEBI:29991"/>
    </ligand>
</feature>
<feature type="binding site" evidence="1">
    <location>
        <position position="228"/>
    </location>
    <ligand>
        <name>L-aspartate</name>
        <dbReference type="ChEBI" id="CHEBI:29991"/>
    </ligand>
</feature>
<feature type="binding site" evidence="1">
    <location>
        <position position="267"/>
    </location>
    <ligand>
        <name>carbamoyl phosphate</name>
        <dbReference type="ChEBI" id="CHEBI:58228"/>
    </ligand>
</feature>
<feature type="binding site" evidence="1">
    <location>
        <position position="268"/>
    </location>
    <ligand>
        <name>carbamoyl phosphate</name>
        <dbReference type="ChEBI" id="CHEBI:58228"/>
    </ligand>
</feature>